<gene>
    <name type="primary">dac</name>
</gene>
<proteinExistence type="evidence at protein level"/>
<feature type="signal peptide" evidence="4">
    <location>
        <begin position="1"/>
        <end position="49"/>
    </location>
</feature>
<feature type="chain" id="PRO_0000027240" description="D-alanyl-D-alanine carboxypeptidase">
    <location>
        <begin position="50"/>
        <end position="515"/>
    </location>
</feature>
<feature type="propeptide" id="PRO_0000308945" description="Removed in mature form">
    <location>
        <begin position="516"/>
        <end position="538"/>
    </location>
</feature>
<feature type="region of interest" description="Disordered" evidence="2">
    <location>
        <begin position="1"/>
        <end position="21"/>
    </location>
</feature>
<feature type="region of interest" description="Absent in class-A beta-lactamases">
    <location>
        <begin position="146"/>
        <end position="319"/>
    </location>
</feature>
<feature type="active site" description="Acyl-ester intermediate">
    <location>
        <position position="98"/>
    </location>
</feature>
<feature type="active site" description="Proton acceptor">
    <location>
        <position position="101"/>
    </location>
</feature>
<feature type="active site" evidence="1">
    <location>
        <position position="347"/>
    </location>
</feature>
<feature type="binding site">
    <location>
        <position position="459"/>
    </location>
    <ligand>
        <name>substrate</name>
    </ligand>
</feature>
<feature type="sequence conflict" description="In Ref. 3; AA sequence." evidence="5" ref="3">
    <original>MK</original>
    <variation>GV</variation>
    <location>
        <begin position="100"/>
        <end position="101"/>
    </location>
</feature>
<feature type="helix" evidence="6">
    <location>
        <begin position="51"/>
        <end position="61"/>
    </location>
</feature>
<feature type="helix" evidence="6">
    <location>
        <begin position="65"/>
        <end position="67"/>
    </location>
</feature>
<feature type="strand" evidence="6">
    <location>
        <begin position="71"/>
        <end position="78"/>
    </location>
</feature>
<feature type="turn" evidence="6">
    <location>
        <begin position="79"/>
        <end position="81"/>
    </location>
</feature>
<feature type="strand" evidence="6">
    <location>
        <begin position="84"/>
        <end position="89"/>
    </location>
</feature>
<feature type="helix" evidence="6">
    <location>
        <begin position="97"/>
        <end position="99"/>
    </location>
</feature>
<feature type="helix" evidence="6">
    <location>
        <begin position="100"/>
        <end position="111"/>
    </location>
</feature>
<feature type="strand" evidence="6">
    <location>
        <begin position="117"/>
        <end position="126"/>
    </location>
</feature>
<feature type="strand" evidence="6">
    <location>
        <begin position="132"/>
        <end position="135"/>
    </location>
</feature>
<feature type="strand" evidence="6">
    <location>
        <begin position="137"/>
        <end position="141"/>
    </location>
</feature>
<feature type="strand" evidence="10">
    <location>
        <begin position="145"/>
        <end position="147"/>
    </location>
</feature>
<feature type="helix" evidence="6">
    <location>
        <begin position="149"/>
        <end position="161"/>
    </location>
</feature>
<feature type="strand" evidence="7">
    <location>
        <begin position="165"/>
        <end position="167"/>
    </location>
</feature>
<feature type="strand" evidence="6">
    <location>
        <begin position="171"/>
        <end position="174"/>
    </location>
</feature>
<feature type="helix" evidence="6">
    <location>
        <begin position="189"/>
        <end position="191"/>
    </location>
</feature>
<feature type="helix" evidence="6">
    <location>
        <begin position="195"/>
        <end position="197"/>
    </location>
</feature>
<feature type="strand" evidence="10">
    <location>
        <begin position="205"/>
        <end position="207"/>
    </location>
</feature>
<feature type="turn" evidence="6">
    <location>
        <begin position="208"/>
        <end position="211"/>
    </location>
</feature>
<feature type="strand" evidence="6">
    <location>
        <begin position="212"/>
        <end position="221"/>
    </location>
</feature>
<feature type="strand" evidence="6">
    <location>
        <begin position="230"/>
        <end position="232"/>
    </location>
</feature>
<feature type="helix" evidence="6">
    <location>
        <begin position="234"/>
        <end position="236"/>
    </location>
</feature>
<feature type="turn" evidence="6">
    <location>
        <begin position="237"/>
        <end position="239"/>
    </location>
</feature>
<feature type="strand" evidence="6">
    <location>
        <begin position="240"/>
        <end position="244"/>
    </location>
</feature>
<feature type="strand" evidence="6">
    <location>
        <begin position="247"/>
        <end position="249"/>
    </location>
</feature>
<feature type="strand" evidence="6">
    <location>
        <begin position="258"/>
        <end position="260"/>
    </location>
</feature>
<feature type="strand" evidence="6">
    <location>
        <begin position="267"/>
        <end position="275"/>
    </location>
</feature>
<feature type="strand" evidence="6">
    <location>
        <begin position="281"/>
        <end position="286"/>
    </location>
</feature>
<feature type="helix" evidence="6">
    <location>
        <begin position="290"/>
        <end position="304"/>
    </location>
</feature>
<feature type="strand" evidence="6">
    <location>
        <begin position="313"/>
        <end position="315"/>
    </location>
</feature>
<feature type="strand" evidence="6">
    <location>
        <begin position="326"/>
        <end position="335"/>
    </location>
</feature>
<feature type="helix" evidence="6">
    <location>
        <begin position="336"/>
        <end position="346"/>
    </location>
</feature>
<feature type="helix" evidence="6">
    <location>
        <begin position="349"/>
        <end position="364"/>
    </location>
</feature>
<feature type="helix" evidence="6">
    <location>
        <begin position="369"/>
        <end position="382"/>
    </location>
</feature>
<feature type="strand" evidence="6">
    <location>
        <begin position="395"/>
        <end position="397"/>
    </location>
</feature>
<feature type="strand" evidence="8">
    <location>
        <begin position="403"/>
        <end position="405"/>
    </location>
</feature>
<feature type="helix" evidence="6">
    <location>
        <begin position="406"/>
        <end position="417"/>
    </location>
</feature>
<feature type="strand" evidence="9">
    <location>
        <begin position="418"/>
        <end position="421"/>
    </location>
</feature>
<feature type="helix" evidence="6">
    <location>
        <begin position="422"/>
        <end position="428"/>
    </location>
</feature>
<feature type="helix" evidence="6">
    <location>
        <begin position="437"/>
        <end position="440"/>
    </location>
</feature>
<feature type="helix" evidence="6">
    <location>
        <begin position="441"/>
        <end position="443"/>
    </location>
</feature>
<feature type="turn" evidence="6">
    <location>
        <begin position="451"/>
        <end position="455"/>
    </location>
</feature>
<feature type="strand" evidence="6">
    <location>
        <begin position="457"/>
        <end position="459"/>
    </location>
</feature>
<feature type="strand" evidence="6">
    <location>
        <begin position="466"/>
        <end position="473"/>
    </location>
</feature>
<feature type="strand" evidence="6">
    <location>
        <begin position="480"/>
        <end position="487"/>
    </location>
</feature>
<feature type="strand" evidence="6">
    <location>
        <begin position="490"/>
        <end position="492"/>
    </location>
</feature>
<feature type="helix" evidence="6">
    <location>
        <begin position="495"/>
        <end position="508"/>
    </location>
</feature>
<evidence type="ECO:0000250" key="1"/>
<evidence type="ECO:0000256" key="2">
    <source>
        <dbReference type="SAM" id="MobiDB-lite"/>
    </source>
</evidence>
<evidence type="ECO:0000269" key="3">
    <source>
    </source>
</evidence>
<evidence type="ECO:0000269" key="4">
    <source>
    </source>
</evidence>
<evidence type="ECO:0000305" key="5"/>
<evidence type="ECO:0007829" key="6">
    <source>
        <dbReference type="PDB" id="1W79"/>
    </source>
</evidence>
<evidence type="ECO:0007829" key="7">
    <source>
        <dbReference type="PDB" id="2VGJ"/>
    </source>
</evidence>
<evidence type="ECO:0007829" key="8">
    <source>
        <dbReference type="PDB" id="2XDM"/>
    </source>
</evidence>
<evidence type="ECO:0007829" key="9">
    <source>
        <dbReference type="PDB" id="2XK1"/>
    </source>
</evidence>
<evidence type="ECO:0007829" key="10">
    <source>
        <dbReference type="PDB" id="2Y4A"/>
    </source>
</evidence>
<organism>
    <name type="scientific">Actinomadura sp. (strain R39)</name>
    <dbReference type="NCBI Taxonomy" id="72570"/>
    <lineage>
        <taxon>Bacteria</taxon>
        <taxon>Bacillati</taxon>
        <taxon>Actinomycetota</taxon>
        <taxon>Actinomycetes</taxon>
        <taxon>Streptosporangiales</taxon>
        <taxon>Thermomonosporaceae</taxon>
        <taxon>Actinomadura</taxon>
    </lineage>
</organism>
<reference key="1">
    <citation type="journal article" date="1992" name="Biochem. J.">
        <title>Primary and predicted secondary structures of the Actinomadura R39 extracellular DD-peptidase, a penicillin-binding protein (PBP) related to the Escherichia coli PBP4.</title>
        <authorList>
            <person name="Granier B."/>
            <person name="Duez C."/>
            <person name="Lepage S."/>
            <person name="Englebert S."/>
            <person name="Dusart J."/>
            <person name="Dideberg O."/>
            <person name="van Beeumen J."/>
            <person name="Frere J.-M."/>
            <person name="Ghuysen J.-M."/>
        </authorList>
    </citation>
    <scope>NUCLEOTIDE SEQUENCE [GENOMIC DNA]</scope>
    <scope>PROTEIN SEQUENCE OF 50-87</scope>
</reference>
<reference key="2">
    <citation type="journal article" date="1992" name="Biochem. J.">
        <authorList>
            <person name="Granier B."/>
            <person name="Duez C."/>
            <person name="Lepage S."/>
            <person name="Englebert S."/>
            <person name="Dusart J."/>
            <person name="Dideberg O."/>
            <person name="van Beeumen J."/>
            <person name="Frere J.-M."/>
            <person name="Ghuysen J.-M."/>
        </authorList>
    </citation>
    <scope>ERRATUM OF PUBMED:1554361</scope>
</reference>
<reference key="3">
    <citation type="journal article" date="1981" name="Biochem. J.">
        <title>The penicillin-binding site in the exocellular DD-carboxypeptidase-transpeptidase of Actinomadura R39.</title>
        <authorList>
            <person name="Duez C."/>
            <person name="Joris B."/>
            <person name="Frere J.-M."/>
            <person name="Ghuysen J.-M."/>
            <person name="van Beeumen J."/>
        </authorList>
    </citation>
    <scope>PROTEIN SEQUENCE OF 95-101</scope>
    <scope>SUBSTRATE-BINDING SITE</scope>
</reference>
<reference key="4">
    <citation type="journal article" date="2001" name="J. Bacteriol.">
        <title>Purification and characterization of PBP4a, a new low-molecular-weight penicillin-binding protein from Bacillus subtilis.</title>
        <authorList>
            <person name="Duez C."/>
            <person name="Vanhove M."/>
            <person name="Gallet X."/>
            <person name="Bouillenne F."/>
            <person name="Docquier J.-D."/>
            <person name="Brans A."/>
            <person name="Frere J.-M."/>
        </authorList>
    </citation>
    <scope>ACTIVITY REGULATION</scope>
</reference>
<reference key="5">
    <citation type="journal article" date="2005" name="J. Biol. Chem.">
        <title>Crystal structure of the Actinomadura R39 DD-peptidase reveals new domains in penicillin-binding proteins.</title>
        <authorList>
            <person name="Sauvage E."/>
            <person name="Herman R."/>
            <person name="Petrella S."/>
            <person name="Duez C."/>
            <person name="Bouillenne F."/>
            <person name="Frere J.-M."/>
            <person name="Charlier P."/>
        </authorList>
    </citation>
    <scope>X-RAY CRYSTALLOGRAPHY (1.8 ANGSTROMS) OF 50-515 OF APOENZYME AND COMPLEX WITH NITROCEFIN</scope>
    <scope>PROCESSING OF C-TERMINUS</scope>
</reference>
<dbReference type="EC" id="3.4.16.4"/>
<dbReference type="EMBL" id="X64790">
    <property type="protein sequence ID" value="CAA46023.1"/>
    <property type="molecule type" value="Genomic_DNA"/>
</dbReference>
<dbReference type="PIR" id="S22409">
    <property type="entry name" value="S22409"/>
</dbReference>
<dbReference type="PDB" id="1W79">
    <property type="method" value="X-ray"/>
    <property type="resolution" value="1.80 A"/>
    <property type="chains" value="A/B/C/D=50-538"/>
</dbReference>
<dbReference type="PDB" id="1W8Q">
    <property type="method" value="X-ray"/>
    <property type="resolution" value="2.85 A"/>
    <property type="chains" value="A/B/C/D=50-538"/>
</dbReference>
<dbReference type="PDB" id="1W8Y">
    <property type="method" value="X-ray"/>
    <property type="resolution" value="2.40 A"/>
    <property type="chains" value="A/B/C/D=50-538"/>
</dbReference>
<dbReference type="PDB" id="2VGJ">
    <property type="method" value="X-ray"/>
    <property type="resolution" value="2.40 A"/>
    <property type="chains" value="A/B/C/D=50-538"/>
</dbReference>
<dbReference type="PDB" id="2VGK">
    <property type="method" value="X-ray"/>
    <property type="resolution" value="2.25 A"/>
    <property type="chains" value="A/B/C/D=50-538"/>
</dbReference>
<dbReference type="PDB" id="2WKE">
    <property type="method" value="X-ray"/>
    <property type="resolution" value="2.20 A"/>
    <property type="chains" value="A/B/C/D=50-515"/>
</dbReference>
<dbReference type="PDB" id="2XDM">
    <property type="method" value="X-ray"/>
    <property type="resolution" value="2.40 A"/>
    <property type="chains" value="A/B/C/D=50-515"/>
</dbReference>
<dbReference type="PDB" id="2XK1">
    <property type="method" value="X-ray"/>
    <property type="resolution" value="2.80 A"/>
    <property type="chains" value="A/B/C/D=50-515"/>
</dbReference>
<dbReference type="PDB" id="2XLN">
    <property type="method" value="X-ray"/>
    <property type="resolution" value="2.40 A"/>
    <property type="chains" value="A/B/C/D=50-538"/>
</dbReference>
<dbReference type="PDB" id="2Y4A">
    <property type="method" value="X-ray"/>
    <property type="resolution" value="2.70 A"/>
    <property type="chains" value="A/B/C/D=50-515"/>
</dbReference>
<dbReference type="PDB" id="2Y55">
    <property type="method" value="X-ray"/>
    <property type="resolution" value="2.60 A"/>
    <property type="chains" value="A/B/C/D=50-515"/>
</dbReference>
<dbReference type="PDB" id="2Y59">
    <property type="method" value="X-ray"/>
    <property type="resolution" value="2.50 A"/>
    <property type="chains" value="A/B/C/D=50-515"/>
</dbReference>
<dbReference type="PDB" id="3ZCZ">
    <property type="method" value="X-ray"/>
    <property type="resolution" value="2.60 A"/>
    <property type="chains" value="A/B/C/D=50-516"/>
</dbReference>
<dbReference type="PDB" id="3ZVT">
    <property type="method" value="X-ray"/>
    <property type="resolution" value="3.10 A"/>
    <property type="chains" value="A/B/C/D=50-515"/>
</dbReference>
<dbReference type="PDB" id="3ZVW">
    <property type="method" value="X-ray"/>
    <property type="resolution" value="2.00 A"/>
    <property type="chains" value="A/B/C/D=50-515"/>
</dbReference>
<dbReference type="PDB" id="4B4X">
    <property type="method" value="X-ray"/>
    <property type="resolution" value="2.65 A"/>
    <property type="chains" value="A/B/C/D=50-515"/>
</dbReference>
<dbReference type="PDB" id="4B4Z">
    <property type="method" value="X-ray"/>
    <property type="resolution" value="2.20 A"/>
    <property type="chains" value="A/B/C/D=50-515"/>
</dbReference>
<dbReference type="PDB" id="4BEN">
    <property type="method" value="X-ray"/>
    <property type="resolution" value="2.15 A"/>
    <property type="chains" value="A/B/C/D=50-515"/>
</dbReference>
<dbReference type="PDBsum" id="1W79"/>
<dbReference type="PDBsum" id="1W8Q"/>
<dbReference type="PDBsum" id="1W8Y"/>
<dbReference type="PDBsum" id="2VGJ"/>
<dbReference type="PDBsum" id="2VGK"/>
<dbReference type="PDBsum" id="2WKE"/>
<dbReference type="PDBsum" id="2XDM"/>
<dbReference type="PDBsum" id="2XK1"/>
<dbReference type="PDBsum" id="2XLN"/>
<dbReference type="PDBsum" id="2Y4A"/>
<dbReference type="PDBsum" id="2Y55"/>
<dbReference type="PDBsum" id="2Y59"/>
<dbReference type="PDBsum" id="3ZCZ"/>
<dbReference type="PDBsum" id="3ZVT"/>
<dbReference type="PDBsum" id="3ZVW"/>
<dbReference type="PDBsum" id="4B4X"/>
<dbReference type="PDBsum" id="4B4Z"/>
<dbReference type="PDBsum" id="4BEN"/>
<dbReference type="SMR" id="P39045"/>
<dbReference type="BindingDB" id="P39045"/>
<dbReference type="ChEMBL" id="CHEMBL6016"/>
<dbReference type="DrugBank" id="DB04742">
    <property type="generic name" value="(2R)-2-{(1R)-2-oxo-1-[(2-thienylacetyl)amino]ethyl}-5,6-dihydro-2h-1,3-thiazine-4-carboxylic acid"/>
</dbReference>
<dbReference type="MEROPS" id="S13.002"/>
<dbReference type="BRENDA" id="3.4.16.4">
    <property type="organism ID" value="129"/>
</dbReference>
<dbReference type="SABIO-RK" id="P39045"/>
<dbReference type="UniPathway" id="UPA00219"/>
<dbReference type="EvolutionaryTrace" id="P39045"/>
<dbReference type="GO" id="GO:0005576">
    <property type="term" value="C:extracellular region"/>
    <property type="evidence" value="ECO:0007669"/>
    <property type="project" value="UniProtKB-SubCell"/>
</dbReference>
<dbReference type="GO" id="GO:0009002">
    <property type="term" value="F:serine-type D-Ala-D-Ala carboxypeptidase activity"/>
    <property type="evidence" value="ECO:0007669"/>
    <property type="project" value="UniProtKB-EC"/>
</dbReference>
<dbReference type="GO" id="GO:0071555">
    <property type="term" value="P:cell wall organization"/>
    <property type="evidence" value="ECO:0007669"/>
    <property type="project" value="UniProtKB-KW"/>
</dbReference>
<dbReference type="GO" id="GO:0009252">
    <property type="term" value="P:peptidoglycan biosynthetic process"/>
    <property type="evidence" value="ECO:0007669"/>
    <property type="project" value="UniProtKB-UniPathway"/>
</dbReference>
<dbReference type="GO" id="GO:0006508">
    <property type="term" value="P:proteolysis"/>
    <property type="evidence" value="ECO:0007669"/>
    <property type="project" value="UniProtKB-KW"/>
</dbReference>
<dbReference type="GO" id="GO:0008360">
    <property type="term" value="P:regulation of cell shape"/>
    <property type="evidence" value="ECO:0007669"/>
    <property type="project" value="UniProtKB-KW"/>
</dbReference>
<dbReference type="GO" id="GO:0046677">
    <property type="term" value="P:response to antibiotic"/>
    <property type="evidence" value="ECO:0007669"/>
    <property type="project" value="UniProtKB-KW"/>
</dbReference>
<dbReference type="Gene3D" id="3.50.80.20">
    <property type="entry name" value="D-Ala-D-Ala carboxypeptidase C, peptidase S13"/>
    <property type="match status" value="1"/>
</dbReference>
<dbReference type="Gene3D" id="3.40.710.10">
    <property type="entry name" value="DD-peptidase/beta-lactamase superfamily"/>
    <property type="match status" value="2"/>
</dbReference>
<dbReference type="InterPro" id="IPR012338">
    <property type="entry name" value="Beta-lactam/transpept-like"/>
</dbReference>
<dbReference type="InterPro" id="IPR000667">
    <property type="entry name" value="Peptidase_S13"/>
</dbReference>
<dbReference type="NCBIfam" id="TIGR00666">
    <property type="entry name" value="PBP4"/>
    <property type="match status" value="1"/>
</dbReference>
<dbReference type="PANTHER" id="PTHR30023">
    <property type="entry name" value="D-ALANYL-D-ALANINE CARBOXYPEPTIDASE"/>
    <property type="match status" value="1"/>
</dbReference>
<dbReference type="PANTHER" id="PTHR30023:SF0">
    <property type="entry name" value="PENICILLIN-SENSITIVE CARBOXYPEPTIDASE A"/>
    <property type="match status" value="1"/>
</dbReference>
<dbReference type="Pfam" id="PF02113">
    <property type="entry name" value="Peptidase_S13"/>
    <property type="match status" value="1"/>
</dbReference>
<dbReference type="PRINTS" id="PR00922">
    <property type="entry name" value="DADACBPTASE3"/>
</dbReference>
<dbReference type="SUPFAM" id="SSF56601">
    <property type="entry name" value="beta-lactamase/transpeptidase-like"/>
    <property type="match status" value="1"/>
</dbReference>
<comment type="function">
    <text>Removes C-terminal D-alanyl residues from sugar-peptide cell wall precursors.</text>
</comment>
<comment type="catalytic activity">
    <reaction>
        <text>Preferential cleavage: (Ac)2-L-Lys-D-Ala-|-D-Ala. Also transpeptidation of peptidyl-alanyl moieties that are N-acyl substituents of D-alanine.</text>
        <dbReference type="EC" id="3.4.16.4"/>
    </reaction>
</comment>
<comment type="activity regulation">
    <text evidence="3">Inhibited by benzylpenicillin, cephaloridine, ampicillin and cetiofur.</text>
</comment>
<comment type="pathway">
    <text>Cell wall biogenesis; peptidoglycan biosynthesis.</text>
</comment>
<comment type="subcellular location">
    <subcellularLocation>
        <location>Secreted</location>
    </subcellularLocation>
</comment>
<comment type="similarity">
    <text evidence="5">Belongs to the peptidase S13 family.</text>
</comment>
<protein>
    <recommendedName>
        <fullName>D-alanyl-D-alanine carboxypeptidase</fullName>
        <shortName>DD-carboxypeptidase</shortName>
        <shortName>DD-peptidase</shortName>
        <ecNumber>3.4.16.4</ecNumber>
    </recommendedName>
    <alternativeName>
        <fullName>Penicillin-binding protein</fullName>
        <shortName>PBP</shortName>
    </alternativeName>
</protein>
<sequence length="538" mass="54974">MKQSSPEPLRPRRTGGRGGARRAAALVTIPLLPMTLLGASPALADASGARLTELREDIDAILEDPALEGAVSGVVVVDTATGEELYSRDGGEQLLPASNMKLFTAAAALEVLGADHSFGTEVAAESAPGRRGEVQDLYLVGRGDPTLSAEDLDAMAAEVAASGVRTVRGDLYADDTWFDSERLVDDWWPEDEPYAYSAQISALTVAHGERFDTGVTEVSVTPAAEGEPADVDLGAAEGYAELDNRAVTGAAGSANTLVIDRPVGTNTIAVTGSLPADAAPVTALRTVDEPAALAGHLFEEALESNGVTVKGDVGLGGVPADWQDAEVLADHTSAELSEILVPFMKFSNNGHAEMLVKSIGQETAGAGTWDAGLVGVEEALSGLGVDTAGLVLNDGSGLSRGNLVTADTVVDLLGQAGSAPWAQTWSASLPVAGESDPFVGGTLANRMRGTAAEGVVEAKTGTMSGVSALSGYVPGPEGELAFSIVNNGHSGPAPLAVQDAIAVRLAEYAGHQAPEGARMMRGPVQGSGELECSWVQAC</sequence>
<accession>P39045</accession>
<keyword id="KW-0002">3D-structure</keyword>
<keyword id="KW-0046">Antibiotic resistance</keyword>
<keyword id="KW-0121">Carboxypeptidase</keyword>
<keyword id="KW-0133">Cell shape</keyword>
<keyword id="KW-0961">Cell wall biogenesis/degradation</keyword>
<keyword id="KW-0903">Direct protein sequencing</keyword>
<keyword id="KW-0378">Hydrolase</keyword>
<keyword id="KW-0573">Peptidoglycan synthesis</keyword>
<keyword id="KW-0645">Protease</keyword>
<keyword id="KW-0964">Secreted</keyword>
<keyword id="KW-0732">Signal</keyword>
<name>DAC_ACTSP</name>